<dbReference type="EMBL" id="U87917">
    <property type="protein sequence ID" value="AAB66817.1"/>
    <property type="molecule type" value="mRNA"/>
</dbReference>
<dbReference type="EMBL" id="AY157981">
    <property type="protein sequence ID" value="AAN64663.1"/>
    <property type="molecule type" value="mRNA"/>
</dbReference>
<dbReference type="EMBL" id="AY157982">
    <property type="protein sequence ID" value="AAN64664.1"/>
    <property type="molecule type" value="mRNA"/>
</dbReference>
<dbReference type="EMBL" id="AY157983">
    <property type="protein sequence ID" value="AAN64665.1"/>
    <property type="molecule type" value="mRNA"/>
</dbReference>
<dbReference type="EMBL" id="AY157984">
    <property type="protein sequence ID" value="AAN64666.1"/>
    <property type="molecule type" value="mRNA"/>
</dbReference>
<dbReference type="EMBL" id="AY157985">
    <property type="protein sequence ID" value="AAN64667.1"/>
    <property type="molecule type" value="mRNA"/>
</dbReference>
<dbReference type="SMR" id="Q8HYX8"/>
<dbReference type="FunCoup" id="Q8HYX8">
    <property type="interactions" value="177"/>
</dbReference>
<dbReference type="STRING" id="9483.ENSCJAP00000006940"/>
<dbReference type="GlyCosmos" id="Q8HYX8">
    <property type="glycosylation" value="18 sites, No reported glycans"/>
</dbReference>
<dbReference type="eggNOG" id="ENOG502QPUC">
    <property type="taxonomic scope" value="Eukaryota"/>
</dbReference>
<dbReference type="InParanoid" id="Q8HYX8"/>
<dbReference type="Proteomes" id="UP000008225">
    <property type="component" value="Unplaced"/>
</dbReference>
<dbReference type="GO" id="GO:0009986">
    <property type="term" value="C:cell surface"/>
    <property type="evidence" value="ECO:0007669"/>
    <property type="project" value="InterPro"/>
</dbReference>
<dbReference type="GO" id="GO:0002079">
    <property type="term" value="C:inner acrosomal membrane"/>
    <property type="evidence" value="ECO:0007669"/>
    <property type="project" value="UniProtKB-SubCell"/>
</dbReference>
<dbReference type="GO" id="GO:0006958">
    <property type="term" value="P:complement activation, classical pathway"/>
    <property type="evidence" value="ECO:0007669"/>
    <property type="project" value="UniProtKB-KW"/>
</dbReference>
<dbReference type="GO" id="GO:0045087">
    <property type="term" value="P:innate immune response"/>
    <property type="evidence" value="ECO:0007669"/>
    <property type="project" value="UniProtKB-KW"/>
</dbReference>
<dbReference type="GO" id="GO:0007338">
    <property type="term" value="P:single fertilization"/>
    <property type="evidence" value="ECO:0007669"/>
    <property type="project" value="UniProtKB-KW"/>
</dbReference>
<dbReference type="CDD" id="cd00033">
    <property type="entry name" value="CCP"/>
    <property type="match status" value="4"/>
</dbReference>
<dbReference type="FunFam" id="2.10.70.10:FF:000014">
    <property type="entry name" value="Membrane cofactor protein"/>
    <property type="match status" value="1"/>
</dbReference>
<dbReference type="FunFam" id="2.10.70.10:FF:000042">
    <property type="entry name" value="Membrane cofactor protein"/>
    <property type="match status" value="1"/>
</dbReference>
<dbReference type="Gene3D" id="2.10.70.10">
    <property type="entry name" value="Complement Module, domain 1"/>
    <property type="match status" value="4"/>
</dbReference>
<dbReference type="InterPro" id="IPR017341">
    <property type="entry name" value="CD46"/>
</dbReference>
<dbReference type="InterPro" id="IPR050350">
    <property type="entry name" value="Compl-Cell_Adhes-Reg"/>
</dbReference>
<dbReference type="InterPro" id="IPR035976">
    <property type="entry name" value="Sushi/SCR/CCP_sf"/>
</dbReference>
<dbReference type="InterPro" id="IPR000436">
    <property type="entry name" value="Sushi_SCR_CCP_dom"/>
</dbReference>
<dbReference type="PANTHER" id="PTHR19325">
    <property type="entry name" value="COMPLEMENT COMPONENT-RELATED SUSHI DOMAIN-CONTAINING"/>
    <property type="match status" value="1"/>
</dbReference>
<dbReference type="PANTHER" id="PTHR19325:SF521">
    <property type="entry name" value="MEMBRANE COFACTOR PROTEIN"/>
    <property type="match status" value="1"/>
</dbReference>
<dbReference type="Pfam" id="PF00084">
    <property type="entry name" value="Sushi"/>
    <property type="match status" value="4"/>
</dbReference>
<dbReference type="PIRSF" id="PIRSF037971">
    <property type="entry name" value="TLX_CD46"/>
    <property type="match status" value="1"/>
</dbReference>
<dbReference type="SMART" id="SM00032">
    <property type="entry name" value="CCP"/>
    <property type="match status" value="4"/>
</dbReference>
<dbReference type="SUPFAM" id="SSF57535">
    <property type="entry name" value="Complement control module/SCR domain"/>
    <property type="match status" value="4"/>
</dbReference>
<dbReference type="PROSITE" id="PS50923">
    <property type="entry name" value="SUSHI"/>
    <property type="match status" value="4"/>
</dbReference>
<proteinExistence type="evidence at protein level"/>
<name>MCP_CALJA</name>
<comment type="function">
    <text evidence="1">Acts as a cofactor for complement factor I, a serine protease which protects autologous cells against complement-mediated injury by cleaving C3b and C4b deposited on host tissue. May be involved in the fusion of the spermatozoa with the oocyte during fertilization. Also acts as a costimulatory factor for T-cells which induces the differentiation of CD4+ into T-regulatory 1 cells. T-regulatory 1 cells suppress immune responses by secreting interleukin-10, and therefore are thought to prevent autoimmunity (By similarity).</text>
</comment>
<comment type="subunit">
    <text evidence="2">Interacts with C3b. Interacts with C4b. Interacts with moesin/MSN.</text>
</comment>
<comment type="subcellular location">
    <subcellularLocation>
        <location evidence="6">Cytoplasmic vesicle</location>
        <location evidence="6">Secretory vesicle</location>
        <location evidence="6">Acrosome inner membrane</location>
        <topology evidence="6">Single-pass type I membrane protein</topology>
    </subcellularLocation>
    <text>Inner acrosomal membrane of spermatozoa.</text>
</comment>
<comment type="alternative products">
    <event type="alternative splicing"/>
    <isoform>
        <id>Q8HYX8-1</id>
        <name>1</name>
        <sequence type="displayed"/>
    </isoform>
    <isoform>
        <id>Q8HYX8-2</id>
        <name>2</name>
        <sequence type="described" ref="VSP_019035 VSP_019036"/>
    </isoform>
    <isoform>
        <id>Q8HYX8-3</id>
        <name>3</name>
        <sequence type="described" ref="VSP_019037"/>
    </isoform>
</comment>
<comment type="tissue specificity">
    <text evidence="6 7 8">Present in blood, liver, lung and testes. Isoform 2, but not isoforms 1 or 3, is present at the erythrocyte membrane (at protein level). Whereas isoforms 2/3 are ubiquitous, isoform 1 is expressed only in testes, brain and heart.</text>
</comment>
<comment type="domain">
    <text evidence="1">Sushi domains 3 and 4 are the most important for interaction with C3b and C4b.</text>
</comment>
<comment type="PTM">
    <text evidence="6">N-glycosylated. Probably less N-glycosylated in testis.</text>
</comment>
<organism>
    <name type="scientific">Callithrix jacchus</name>
    <name type="common">White-tufted-ear marmoset</name>
    <dbReference type="NCBI Taxonomy" id="9483"/>
    <lineage>
        <taxon>Eukaryota</taxon>
        <taxon>Metazoa</taxon>
        <taxon>Chordata</taxon>
        <taxon>Craniata</taxon>
        <taxon>Vertebrata</taxon>
        <taxon>Euteleostomi</taxon>
        <taxon>Mammalia</taxon>
        <taxon>Eutheria</taxon>
        <taxon>Euarchontoglires</taxon>
        <taxon>Primates</taxon>
        <taxon>Haplorrhini</taxon>
        <taxon>Platyrrhini</taxon>
        <taxon>Cebidae</taxon>
        <taxon>Callitrichinae</taxon>
        <taxon>Callithrix</taxon>
        <taxon>Callithrix</taxon>
    </lineage>
</organism>
<evidence type="ECO:0000250" key="1"/>
<evidence type="ECO:0000250" key="2">
    <source>
        <dbReference type="UniProtKB" id="P15529"/>
    </source>
</evidence>
<evidence type="ECO:0000255" key="3"/>
<evidence type="ECO:0000255" key="4">
    <source>
        <dbReference type="PROSITE-ProRule" id="PRU00302"/>
    </source>
</evidence>
<evidence type="ECO:0000256" key="5">
    <source>
        <dbReference type="SAM" id="MobiDB-lite"/>
    </source>
</evidence>
<evidence type="ECO:0000269" key="6">
    <source>
    </source>
</evidence>
<evidence type="ECO:0000269" key="7">
    <source>
    </source>
</evidence>
<evidence type="ECO:0000269" key="8">
    <source>
    </source>
</evidence>
<evidence type="ECO:0000303" key="9">
    <source>
    </source>
</evidence>
<evidence type="ECO:0000303" key="10">
    <source>
    </source>
</evidence>
<evidence type="ECO:0000305" key="11"/>
<gene>
    <name type="primary">CD46</name>
    <name type="synonym">MCP</name>
</gene>
<feature type="signal peptide" evidence="3">
    <location>
        <begin position="1"/>
        <end position="32"/>
    </location>
</feature>
<feature type="chain" id="PRO_0000238969" description="Membrane cofactor protein">
    <location>
        <begin position="33"/>
        <end position="392"/>
    </location>
</feature>
<feature type="topological domain" description="Extracellular" evidence="3">
    <location>
        <begin position="33"/>
        <end position="344"/>
    </location>
</feature>
<feature type="transmembrane region" description="Helical" evidence="3">
    <location>
        <begin position="345"/>
        <end position="365"/>
    </location>
</feature>
<feature type="topological domain" description="Cytoplasmic" evidence="3">
    <location>
        <begin position="366"/>
        <end position="392"/>
    </location>
</feature>
<feature type="domain" description="Sushi 1" evidence="4">
    <location>
        <begin position="33"/>
        <end position="96"/>
    </location>
</feature>
<feature type="domain" description="Sushi 2" evidence="4">
    <location>
        <begin position="97"/>
        <end position="159"/>
    </location>
</feature>
<feature type="domain" description="Sushi 3" evidence="4">
    <location>
        <begin position="160"/>
        <end position="225"/>
    </location>
</feature>
<feature type="domain" description="Sushi 4" evidence="4">
    <location>
        <begin position="226"/>
        <end position="285"/>
    </location>
</feature>
<feature type="region of interest" description="Disordered" evidence="5">
    <location>
        <begin position="281"/>
        <end position="329"/>
    </location>
</feature>
<feature type="compositionally biased region" description="Low complexity" evidence="5">
    <location>
        <begin position="287"/>
        <end position="319"/>
    </location>
</feature>
<feature type="glycosylation site" description="N-linked (GlcNAc...) asparagine" evidence="3">
    <location>
        <position position="114"/>
    </location>
</feature>
<feature type="glycosylation site" description="O-linked (GalNAc...) serine" evidence="3">
    <location>
        <position position="290"/>
    </location>
</feature>
<feature type="glycosylation site" description="O-linked (GalNAc...) serine" evidence="3">
    <location>
        <position position="291"/>
    </location>
</feature>
<feature type="glycosylation site" description="O-linked (GalNAc...) threonine" evidence="3">
    <location>
        <position position="292"/>
    </location>
</feature>
<feature type="glycosylation site" description="O-linked (GalNAc...) threonine" evidence="3">
    <location>
        <position position="296"/>
    </location>
</feature>
<feature type="glycosylation site" description="O-linked (GalNAc...) serine" evidence="3">
    <location>
        <position position="298"/>
    </location>
</feature>
<feature type="glycosylation site" description="O-linked (GalNAc...) serine" evidence="3">
    <location>
        <position position="300"/>
    </location>
</feature>
<feature type="glycosylation site" description="O-linked (GalNAc...) serine" evidence="3">
    <location>
        <position position="302"/>
    </location>
</feature>
<feature type="glycosylation site" description="O-linked (GalNAc...) threonine" evidence="3">
    <location>
        <position position="303"/>
    </location>
</feature>
<feature type="glycosylation site" description="O-linked (GalNAc...) serine" evidence="3">
    <location>
        <position position="304"/>
    </location>
</feature>
<feature type="glycosylation site" description="O-linked (GalNAc...) threonine" evidence="3">
    <location>
        <position position="306"/>
    </location>
</feature>
<feature type="glycosylation site" description="O-linked (GalNAc...) threonine" evidence="3">
    <location>
        <position position="307"/>
    </location>
</feature>
<feature type="glycosylation site" description="O-linked (GalNAc...) serine" evidence="3">
    <location>
        <position position="309"/>
    </location>
</feature>
<feature type="glycosylation site" description="O-linked (GalNAc...) threonine" evidence="3">
    <location>
        <position position="311"/>
    </location>
</feature>
<feature type="glycosylation site" description="O-linked (GalNAc...) serine" evidence="3">
    <location>
        <position position="312"/>
    </location>
</feature>
<feature type="glycosylation site" description="O-linked (GalNAc...) serine" evidence="3">
    <location>
        <position position="313"/>
    </location>
</feature>
<feature type="glycosylation site" description="O-linked (GalNAc...) serine" evidence="3">
    <location>
        <position position="315"/>
    </location>
</feature>
<feature type="glycosylation site" description="O-linked (GalNAc...) threonine" evidence="3">
    <location>
        <position position="320"/>
    </location>
</feature>
<feature type="disulfide bond" evidence="4">
    <location>
        <begin position="35"/>
        <end position="80"/>
    </location>
</feature>
<feature type="disulfide bond" evidence="4">
    <location>
        <begin position="64"/>
        <end position="94"/>
    </location>
</feature>
<feature type="disulfide bond" evidence="4">
    <location>
        <begin position="99"/>
        <end position="141"/>
    </location>
</feature>
<feature type="disulfide bond" evidence="4">
    <location>
        <begin position="127"/>
        <end position="157"/>
    </location>
</feature>
<feature type="disulfide bond" evidence="4">
    <location>
        <begin position="162"/>
        <end position="210"/>
    </location>
</feature>
<feature type="disulfide bond" evidence="4">
    <location>
        <begin position="191"/>
        <end position="223"/>
    </location>
</feature>
<feature type="disulfide bond" evidence="4">
    <location>
        <begin position="228"/>
        <end position="270"/>
    </location>
</feature>
<feature type="splice variant" id="VSP_019035" description="In isoform 2." evidence="10">
    <original>D</original>
    <variation>E</variation>
    <location>
        <position position="33"/>
    </location>
</feature>
<feature type="splice variant" id="VSP_019036" description="In isoform 2." evidence="10">
    <location>
        <begin position="34"/>
        <end position="96"/>
    </location>
</feature>
<feature type="splice variant" id="VSP_019037" description="In isoform 3." evidence="9">
    <original>TYLTDETHREVNFTSL</original>
    <variation>KADGTAEYATYQSK</variation>
    <location>
        <begin position="377"/>
        <end position="392"/>
    </location>
</feature>
<feature type="sequence conflict" description="In Ref. 2; AAN64667." evidence="11" ref="2">
    <original>Y</original>
    <variation>R</variation>
    <location>
        <position position="131"/>
    </location>
</feature>
<feature type="sequence conflict" description="In Ref. 2; AAN64666." evidence="11" ref="2">
    <original>I</original>
    <variation>R</variation>
    <location>
        <position position="160"/>
    </location>
</feature>
<feature type="modified residue" description="Phosphotyrosine" evidence="11">
    <location sequence="Q8HYX8-3">
        <position position="384"/>
    </location>
</feature>
<feature type="modified residue" description="Phosphotyrosine" evidence="11">
    <location sequence="Q8HYX8-3">
        <position position="387"/>
    </location>
</feature>
<accession>Q8HYX8</accession>
<accession>O19123</accession>
<accession>Q8HYX7</accession>
<accession>Q8HYX9</accession>
<accession>Q8HYY0</accession>
<accession>Q8HYY1</accession>
<keyword id="KW-0025">Alternative splicing</keyword>
<keyword id="KW-0180">Complement pathway</keyword>
<keyword id="KW-0968">Cytoplasmic vesicle</keyword>
<keyword id="KW-1015">Disulfide bond</keyword>
<keyword id="KW-0278">Fertilization</keyword>
<keyword id="KW-0325">Glycoprotein</keyword>
<keyword id="KW-0391">Immunity</keyword>
<keyword id="KW-0399">Innate immunity</keyword>
<keyword id="KW-0472">Membrane</keyword>
<keyword id="KW-0597">Phosphoprotein</keyword>
<keyword id="KW-1185">Reference proteome</keyword>
<keyword id="KW-0677">Repeat</keyword>
<keyword id="KW-0732">Signal</keyword>
<keyword id="KW-0768">Sushi</keyword>
<keyword id="KW-0812">Transmembrane</keyword>
<keyword id="KW-1133">Transmembrane helix</keyword>
<protein>
    <recommendedName>
        <fullName>Membrane cofactor protein</fullName>
    </recommendedName>
    <cdAntigenName>CD46</cdAntigenName>
</protein>
<sequence>MAPPSRRECPFPSRRFPGLLLAALVLLRSSCSDACGPPPTFEAMELTSKPKPYYKVGEQVEYDCKKGYHHFAPFLTHSICDRNHTWLPISDEPCVKKVCHYIPNPLHGEAILANGSYSFGNQLHFICNDGYYLIGKEILYCELKGSDAVWSGRPPICQKIVCKPPPKINNGKHTFSDVEVFEYLDAVTYSCDPAPGPDPFSLIGESTIYCRDNSLWSDDAPECKVVKCRFPVIENGKQIAGFGKKFYYKATVIFERDKGFHIIGSDTIVCNSNSTWDPPVPKCAKELPPSSTKPPTLSHSVSTSPTTVSPTSSVSGPRPTYKPPVSRYPGYPNPDEGMLNSLDEWAIALIVIAILVGVAIISFGLHRYLQRRKKKGTYLTDETHREVNFTSL</sequence>
<reference key="1">
    <citation type="journal article" date="1997" name="J. Virol.">
        <title>Artificial mutations and natural variations in the CD46 molecules from human and monkey cells define regions important for measles virus binding.</title>
        <authorList>
            <person name="Hsu E.C."/>
            <person name="Doerig R.E."/>
            <person name="Sarangi F."/>
            <person name="Marcil A."/>
            <person name="Iorio C."/>
            <person name="Richardson C.D."/>
        </authorList>
    </citation>
    <scope>NUCLEOTIDE SEQUENCE [MRNA] OF 1-285 (ISOFORM 2)</scope>
    <scope>TISSUE SPECIFICITY</scope>
    <source>
        <tissue>Lymphocyte</tissue>
    </source>
</reference>
<reference key="2">
    <citation type="journal article" date="2002" name="J. Immunol.">
        <title>Inhibiting measles virus infection but promoting reproduction: an explanation for splicing and tissue-specific expression of CD46.</title>
        <authorList>
            <person name="Riley R.C."/>
            <person name="Tannenbaum P.L."/>
            <person name="Abbott D.H."/>
            <person name="Atkinson J.P."/>
        </authorList>
    </citation>
    <scope>NUCLEOTIDE SEQUENCE [MRNA] OF 31-160 (ISOFORMS 1/3)</scope>
    <scope>NUCLEOTIDE SEQUENCE [MRNA] OF 286-392 (ISOFORMS 1/2 AND 3)</scope>
    <scope>TISSUE SPECIFICITY</scope>
    <scope>GLYCOSYLATION</scope>
    <scope>SUBCELLULAR LOCATION</scope>
    <source>
        <tissue>Lung</tissue>
        <tissue>Testis</tissue>
    </source>
</reference>
<reference key="3">
    <citation type="journal article" date="1998" name="J. Virol.">
        <title>A single amino acid change in the hemagglutinin protein of measles virus determines its ability to bind CD46 and reveals another receptor on marmoset B cells.</title>
        <authorList>
            <person name="Hsu E.C."/>
            <person name="Sarangi F."/>
            <person name="Iorio C."/>
            <person name="Sidhu M.S."/>
            <person name="Udem S.A."/>
            <person name="Dillehay D.L."/>
            <person name="Xu W."/>
            <person name="Rota P.A."/>
            <person name="Bellini W.J."/>
            <person name="Richardson C.D."/>
        </authorList>
    </citation>
    <scope>TISSUE SPECIFICITY</scope>
</reference>